<sequence length="723" mass="80251">MSTATGPEAAPKPSAKSIYEQRKRYSTVVMADVSQYPVNHLVTFCLGEDDGVHTVEDASRKLAVMDSQGRVWAQEMLLRVSPDHVTLLDPASKEELESYPLGAIVRCDAVMPPGRSRSLLLLVCQEPERAQPDVHFFQGLRLGAELIREDIQGALHNYRSGRGERRAAALRATQEELQRDRSPAAETPPLQRRPSVRAVISTVERGAGRGRPQAKPIPEAEEAQRPEPVGTSSNADSASPDLGPRGPDLAVLQAEREVDILNHVFDDVESFVSRLQKSAEAARVLEHRERGRRSRRRAAGEGLLTLRAKPPSEAEYTDVLQKIKYAFSLLARLRGNIADPSSPELLHFLFGPLQMIVNTSGGPEFASSVRRPHLTSDAVALLRDNVTPRENELWTSLGDSWTRPGLELSPEEGPPYRPEFFSGWEPPVTDPQSRAWEDPVEKQLQHERRRRQQSAPQVAVNGHRDLEPESEPQLESETAGKWVLCNYDFQARNSSELSVKQRDVLEVLDDSRKWWKVRDPAGQEGYVPYNILTPYPGPRLHHSQSPARSLNSTPPPPPAPAPAPPPALARPRWDRPRWDSCDSLNGLDPSEKEKFSQMLIVNEELQARLAQGRSGPSRAVPGPRAPEPQLSPGSDASEVRAWLQAKGFSSGTVDALGVLTGAQLFSLQKEELRAVSPEEGARVYSQVTVQRSLLEDKEKVSELEAVMEKQKKKVEGEVEMEVI</sequence>
<organism>
    <name type="scientific">Homo sapiens</name>
    <name type="common">Human</name>
    <dbReference type="NCBI Taxonomy" id="9606"/>
    <lineage>
        <taxon>Eukaryota</taxon>
        <taxon>Metazoa</taxon>
        <taxon>Chordata</taxon>
        <taxon>Craniata</taxon>
        <taxon>Vertebrata</taxon>
        <taxon>Euteleostomi</taxon>
        <taxon>Mammalia</taxon>
        <taxon>Eutheria</taxon>
        <taxon>Euarchontoglires</taxon>
        <taxon>Primates</taxon>
        <taxon>Haplorrhini</taxon>
        <taxon>Catarrhini</taxon>
        <taxon>Hominidae</taxon>
        <taxon>Homo</taxon>
    </lineage>
</organism>
<accession>Q8TE68</accession>
<accession>Q71RE2</accession>
<accession>Q8NC10</accession>
<accession>Q96BB7</accession>
<accession>Q9BSQ2</accession>
<accession>Q9GZQ2</accession>
<accession>Q9NXH0</accession>
<gene>
    <name type="primary">EPS8L1</name>
    <name type="synonym">DRC3</name>
    <name type="synonym">EPS8R1</name>
    <name type="ORF">PP10566</name>
</gene>
<comment type="function">
    <text evidence="6">Stimulates guanine exchange activity of SOS1. May play a role in membrane ruffling and remodeling of the actin cytoskeleton.</text>
</comment>
<comment type="subunit">
    <text evidence="6">Interacts with ABI1. Part of a complex that contains SOS1, ABI1 and EPS8L2. Associates with F-actin.</text>
</comment>
<comment type="interaction">
    <interactant intactId="EBI-7487998">
        <id>Q8TE68</id>
    </interactant>
    <interactant intactId="EBI-8567699">
        <id>Q9H013</id>
        <label>ADAM19</label>
    </interactant>
    <organismsDiffer>false</organismsDiffer>
    <experiments>2</experiments>
</comment>
<comment type="interaction">
    <interactant intactId="EBI-7487998">
        <id>Q8TE68</id>
    </interactant>
    <interactant intactId="EBI-1211297">
        <id>P07766</id>
        <label>CD3E</label>
    </interactant>
    <organismsDiffer>false</organismsDiffer>
    <experiments>6</experiments>
</comment>
<comment type="interaction">
    <interactant intactId="EBI-7487998">
        <id>Q8TE68</id>
    </interactant>
    <interactant intactId="EBI-750109">
        <id>Q9NYB0</id>
        <label>TERF2IP</label>
    </interactant>
    <organismsDiffer>false</organismsDiffer>
    <experiments>2</experiments>
</comment>
<comment type="interaction">
    <interactant intactId="EBI-12003490">
        <id>Q8TE68-2</id>
    </interactant>
    <interactant intactId="EBI-11096309">
        <id>Q9NYB9-2</id>
        <label>ABI2</label>
    </interactant>
    <organismsDiffer>false</organismsDiffer>
    <experiments>3</experiments>
</comment>
<comment type="interaction">
    <interactant intactId="EBI-12003490">
        <id>Q8TE68-2</id>
    </interactant>
    <interactant intactId="EBI-3867333">
        <id>A8MQ03</id>
        <label>CYSRT1</label>
    </interactant>
    <organismsDiffer>false</organismsDiffer>
    <experiments>3</experiments>
</comment>
<comment type="interaction">
    <interactant intactId="EBI-21574901">
        <id>Q8TE68-3</id>
    </interactant>
    <interactant intactId="EBI-747754">
        <id>P28799</id>
        <label>GRN</label>
    </interactant>
    <organismsDiffer>false</organismsDiffer>
    <experiments>3</experiments>
</comment>
<comment type="interaction">
    <interactant intactId="EBI-21574901">
        <id>Q8TE68-3</id>
    </interactant>
    <interactant intactId="EBI-466029">
        <id>P42858</id>
        <label>HTT</label>
    </interactant>
    <organismsDiffer>false</organismsDiffer>
    <experiments>3</experiments>
</comment>
<comment type="interaction">
    <interactant intactId="EBI-21574901">
        <id>Q8TE68-3</id>
    </interactant>
    <interactant intactId="EBI-988601">
        <id>O43933</id>
        <label>PEX1</label>
    </interactant>
    <organismsDiffer>false</organismsDiffer>
    <experiments>3</experiments>
</comment>
<comment type="interaction">
    <interactant intactId="EBI-21574901">
        <id>Q8TE68-3</id>
    </interactant>
    <interactant intactId="EBI-720609">
        <id>O76024</id>
        <label>WFS1</label>
    </interactant>
    <organismsDiffer>false</organismsDiffer>
    <experiments>3</experiments>
</comment>
<comment type="subcellular location">
    <subcellularLocation>
        <location evidence="6">Cytoplasm</location>
    </subcellularLocation>
</comment>
<comment type="alternative products">
    <event type="alternative splicing"/>
    <isoform>
        <id>Q8TE68-1</id>
        <name>1</name>
        <name>A</name>
        <sequence type="displayed"/>
    </isoform>
    <isoform>
        <id>Q8TE68-2</id>
        <name>2</name>
        <name>B</name>
        <sequence type="described" ref="VSP_019083 VSP_019085"/>
    </isoform>
    <isoform>
        <id>Q8TE68-3</id>
        <name>3</name>
        <name>C</name>
        <sequence type="described" ref="VSP_019084 VSP_019088 VSP_019089"/>
    </isoform>
    <isoform>
        <id>Q8TE68-4</id>
        <name>4</name>
        <sequence type="described" ref="VSP_019082 VSP_019086 VSP_019087 VSP_019088"/>
    </isoform>
</comment>
<comment type="tissue specificity">
    <text evidence="6">Detected in placenta.</text>
</comment>
<comment type="similarity">
    <text evidence="12">Belongs to the EPS8 family.</text>
</comment>
<comment type="sequence caution" evidence="12">
    <conflict type="frameshift">
        <sequence resource="EMBL-CDS" id="AAG03038"/>
    </conflict>
</comment>
<comment type="sequence caution" evidence="12">
    <conflict type="erroneous gene model prediction">
        <sequence resource="EMBL-CDS" id="AAG03039"/>
    </conflict>
</comment>
<protein>
    <recommendedName>
        <fullName>Epidermal growth factor receptor kinase substrate 8-like protein 1</fullName>
        <shortName>EPS8-like protein 1</shortName>
    </recommendedName>
    <alternativeName>
        <fullName>Epidermal growth factor receptor pathway substrate 8-related protein 1</fullName>
        <shortName>EPS8-related protein 1</shortName>
    </alternativeName>
</protein>
<name>ES8L1_HUMAN</name>
<keyword id="KW-0002">3D-structure</keyword>
<keyword id="KW-0025">Alternative splicing</keyword>
<keyword id="KW-0175">Coiled coil</keyword>
<keyword id="KW-0963">Cytoplasm</keyword>
<keyword id="KW-0597">Phosphoprotein</keyword>
<keyword id="KW-1267">Proteomics identification</keyword>
<keyword id="KW-1185">Reference proteome</keyword>
<keyword id="KW-0728">SH3 domain</keyword>
<evidence type="ECO:0000250" key="1">
    <source>
        <dbReference type="UniProtKB" id="Q8R5F8"/>
    </source>
</evidence>
<evidence type="ECO:0000255" key="2"/>
<evidence type="ECO:0000255" key="3">
    <source>
        <dbReference type="PROSITE-ProRule" id="PRU00192"/>
    </source>
</evidence>
<evidence type="ECO:0000256" key="4">
    <source>
        <dbReference type="SAM" id="MobiDB-lite"/>
    </source>
</evidence>
<evidence type="ECO:0000269" key="5">
    <source>
    </source>
</evidence>
<evidence type="ECO:0000269" key="6">
    <source>
    </source>
</evidence>
<evidence type="ECO:0000269" key="7">
    <source>
    </source>
</evidence>
<evidence type="ECO:0000269" key="8">
    <source>
    </source>
</evidence>
<evidence type="ECO:0000303" key="9">
    <source>
    </source>
</evidence>
<evidence type="ECO:0000303" key="10">
    <source>
    </source>
</evidence>
<evidence type="ECO:0000303" key="11">
    <source>
    </source>
</evidence>
<evidence type="ECO:0000305" key="12"/>
<evidence type="ECO:0007744" key="13">
    <source>
    </source>
</evidence>
<evidence type="ECO:0007829" key="14">
    <source>
        <dbReference type="PDB" id="2K2M"/>
    </source>
</evidence>
<feature type="chain" id="PRO_0000239082" description="Epidermal growth factor receptor kinase substrate 8-like protein 1">
    <location>
        <begin position="1"/>
        <end position="723"/>
    </location>
</feature>
<feature type="domain" description="PTB" evidence="2">
    <location>
        <begin position="35"/>
        <end position="164"/>
    </location>
</feature>
<feature type="domain" description="SH3" evidence="3">
    <location>
        <begin position="478"/>
        <end position="537"/>
    </location>
</feature>
<feature type="region of interest" description="Disordered" evidence="4">
    <location>
        <begin position="162"/>
        <end position="247"/>
    </location>
</feature>
<feature type="region of interest" description="Disordered" evidence="4">
    <location>
        <begin position="442"/>
        <end position="477"/>
    </location>
</feature>
<feature type="region of interest" description="Disordered" evidence="4">
    <location>
        <begin position="537"/>
        <end position="589"/>
    </location>
</feature>
<feature type="region of interest" description="Disordered" evidence="4">
    <location>
        <begin position="609"/>
        <end position="636"/>
    </location>
</feature>
<feature type="coiled-coil region" evidence="2">
    <location>
        <begin position="689"/>
        <end position="719"/>
    </location>
</feature>
<feature type="compositionally biased region" description="Basic and acidic residues" evidence="4">
    <location>
        <begin position="162"/>
        <end position="183"/>
    </location>
</feature>
<feature type="compositionally biased region" description="Polar residues" evidence="4">
    <location>
        <begin position="543"/>
        <end position="552"/>
    </location>
</feature>
<feature type="compositionally biased region" description="Pro residues" evidence="4">
    <location>
        <begin position="553"/>
        <end position="568"/>
    </location>
</feature>
<feature type="compositionally biased region" description="Basic and acidic residues" evidence="4">
    <location>
        <begin position="571"/>
        <end position="580"/>
    </location>
</feature>
<feature type="modified residue" description="Phosphoserine" evidence="13">
    <location>
        <position position="182"/>
    </location>
</feature>
<feature type="modified residue" description="Phosphothreonine" evidence="1">
    <location>
        <position position="187"/>
    </location>
</feature>
<feature type="splice variant" id="VSP_019082" description="In isoform 4." evidence="9">
    <location>
        <begin position="1"/>
        <end position="177"/>
    </location>
</feature>
<feature type="splice variant" id="VSP_019083" description="In isoform 2." evidence="10 11">
    <location>
        <begin position="1"/>
        <end position="127"/>
    </location>
</feature>
<feature type="splice variant" id="VSP_019084" description="In isoform 3." evidence="11">
    <original>MSTATGPEAAPKPSAKSIYEQRKRYSTVVMADVSQYPVN</original>
    <variation>MGRKAIVLAIANTSLAFPLCQ</variation>
    <location>
        <begin position="1"/>
        <end position="39"/>
    </location>
</feature>
<feature type="splice variant" id="VSP_019085" description="In isoform 2." evidence="10 11">
    <original>ERAQPDVHFFQGLRLG</original>
    <variation>MNRTWPRRIWGSSQDE</variation>
    <location>
        <begin position="128"/>
        <end position="143"/>
    </location>
</feature>
<feature type="splice variant" id="VSP_019086" description="In isoform 4." evidence="9">
    <original>QRDRSPAAET</original>
    <variation>MSPLSPGSPL</variation>
    <location>
        <begin position="178"/>
        <end position="187"/>
    </location>
</feature>
<feature type="splice variant" id="VSP_019087" description="In isoform 4." evidence="9">
    <original>QRRPSVRAVISTVERGAGRGRPQAKPIPEAEEAQRPEPVGTSSNADSASPDLGPRGPDLAVLQAEREVDILNHVFDDVESFVSRLQKSAEAARVLEHRERGRRSRRRAAG</original>
    <variation>ARADLTAILTGCPPLSACLVLAPRPHRRARLLPS</variation>
    <location>
        <begin position="191"/>
        <end position="300"/>
    </location>
</feature>
<feature type="splice variant" id="VSP_019088" description="In isoform 3 and isoform 4." evidence="9 11">
    <original>R</original>
    <variation>RQVTQATQQGRGWEVRGRGRSAWPRLTRLSYFL</variation>
    <location>
        <position position="451"/>
    </location>
</feature>
<feature type="splice variant" id="VSP_019089" description="In isoform 3." evidence="11">
    <original>DDSRKWWKVRDPAGQEGYVPYNILTPYPGPRLHHSQSPARSLNSTPPPPPAPAPAPPPALARPRWDRPRWDSCDSLNGLDPSEKEKFSQMLIVNEELQARLAQGRSGPSRAVPGPRAPEPQLSPGSDASEVRAWLQAKGFSSGTVDALGVLTGAQLFSLQKEELRAVSPEEGARVYSQVTVQRSLLED</original>
    <variation>ED</variation>
    <location>
        <begin position="509"/>
        <end position="696"/>
    </location>
</feature>
<feature type="sequence variant" id="VAR_060375" description="In dbSNP:rs12609976." evidence="5 8">
    <original>A</original>
    <variation>T</variation>
    <location>
        <position position="4"/>
    </location>
</feature>
<feature type="sequence variant" id="VAR_060376" description="In dbSNP:rs1620074.">
    <original>R</original>
    <variation>G</variation>
    <location>
        <position position="288"/>
    </location>
</feature>
<feature type="sequence variant" id="VAR_056870" description="In dbSNP:rs1628576." evidence="5 8">
    <original>Q</original>
    <variation>E</variation>
    <location>
        <position position="457"/>
    </location>
</feature>
<feature type="sequence variant" id="VAR_060377" description="In dbSNP:rs1054940." evidence="5 7 8">
    <original>K</original>
    <variation>R</variation>
    <location>
        <position position="669"/>
    </location>
</feature>
<feature type="sequence variant" id="VAR_061647" description="In dbSNP:rs60073068.">
    <original>L</original>
    <variation>P</variation>
    <location>
        <position position="703"/>
    </location>
</feature>
<feature type="sequence conflict" description="In Ref. 4; BAC11399." evidence="12" ref="4">
    <original>M</original>
    <variation>T</variation>
    <location>
        <position position="30"/>
    </location>
</feature>
<feature type="sequence conflict" description="In Ref. 2; AAL76117." evidence="12" ref="2">
    <original>P</original>
    <variation>S</variation>
    <location>
        <position position="555"/>
    </location>
</feature>
<feature type="sequence conflict" description="In Ref. 4; BAA91041." evidence="12" ref="4">
    <original>T</original>
    <variation>I</variation>
    <location>
        <position position="688"/>
    </location>
</feature>
<feature type="sequence conflict" description="In Ref. 4; BAC11399." evidence="12" ref="4">
    <original>E</original>
    <variation>G</variation>
    <location>
        <position position="695"/>
    </location>
</feature>
<feature type="strand" evidence="14">
    <location>
        <begin position="482"/>
        <end position="487"/>
    </location>
</feature>
<feature type="strand" evidence="14">
    <location>
        <begin position="493"/>
        <end position="496"/>
    </location>
</feature>
<feature type="strand" evidence="14">
    <location>
        <begin position="504"/>
        <end position="509"/>
    </location>
</feature>
<feature type="strand" evidence="14">
    <location>
        <begin position="511"/>
        <end position="518"/>
    </location>
</feature>
<feature type="strand" evidence="14">
    <location>
        <begin position="525"/>
        <end position="528"/>
    </location>
</feature>
<feature type="helix" evidence="14">
    <location>
        <begin position="529"/>
        <end position="531"/>
    </location>
</feature>
<feature type="strand" evidence="14">
    <location>
        <begin position="532"/>
        <end position="534"/>
    </location>
</feature>
<dbReference type="EMBL" id="AF282168">
    <property type="protein sequence ID" value="AAG03039.1"/>
    <property type="status" value="ALT_SEQ"/>
    <property type="molecule type" value="Genomic_DNA"/>
</dbReference>
<dbReference type="EMBL" id="AF282167">
    <property type="protein sequence ID" value="AAG03038.1"/>
    <property type="status" value="ALT_FRAME"/>
    <property type="molecule type" value="mRNA"/>
</dbReference>
<dbReference type="EMBL" id="AY074928">
    <property type="protein sequence ID" value="AAL76117.1"/>
    <property type="molecule type" value="mRNA"/>
</dbReference>
<dbReference type="EMBL" id="AF370395">
    <property type="protein sequence ID" value="AAQ15231.1"/>
    <property type="molecule type" value="mRNA"/>
</dbReference>
<dbReference type="EMBL" id="AK000265">
    <property type="protein sequence ID" value="BAA91041.1"/>
    <property type="molecule type" value="mRNA"/>
</dbReference>
<dbReference type="EMBL" id="AK075098">
    <property type="protein sequence ID" value="BAC11399.1"/>
    <property type="molecule type" value="mRNA"/>
</dbReference>
<dbReference type="EMBL" id="AC005782">
    <property type="status" value="NOT_ANNOTATED_CDS"/>
    <property type="molecule type" value="Genomic_DNA"/>
</dbReference>
<dbReference type="EMBL" id="AC011476">
    <property type="status" value="NOT_ANNOTATED_CDS"/>
    <property type="molecule type" value="Genomic_DNA"/>
</dbReference>
<dbReference type="EMBL" id="BC004907">
    <property type="protein sequence ID" value="AAH04907.2"/>
    <property type="molecule type" value="mRNA"/>
</dbReference>
<dbReference type="EMBL" id="BC015763">
    <property type="protein sequence ID" value="AAH15763.1"/>
    <property type="molecule type" value="mRNA"/>
</dbReference>
<dbReference type="CCDS" id="CCDS12914.1">
    <molecule id="Q8TE68-1"/>
</dbReference>
<dbReference type="CCDS" id="CCDS12915.1">
    <molecule id="Q8TE68-2"/>
</dbReference>
<dbReference type="RefSeq" id="NP_060199.3">
    <molecule id="Q8TE68-2"/>
    <property type="nucleotide sequence ID" value="NM_017729.3"/>
</dbReference>
<dbReference type="RefSeq" id="NP_573441.2">
    <molecule id="Q8TE68-1"/>
    <property type="nucleotide sequence ID" value="NM_133180.3"/>
</dbReference>
<dbReference type="RefSeq" id="XP_047294978.1">
    <molecule id="Q8TE68-1"/>
    <property type="nucleotide sequence ID" value="XM_047439022.1"/>
</dbReference>
<dbReference type="PDB" id="2K2M">
    <property type="method" value="NMR"/>
    <property type="chains" value="A=481-536"/>
</dbReference>
<dbReference type="PDB" id="2ROL">
    <property type="method" value="NMR"/>
    <property type="chains" value="A=478-537"/>
</dbReference>
<dbReference type="PDBsum" id="2K2M"/>
<dbReference type="PDBsum" id="2ROL"/>
<dbReference type="BMRB" id="Q8TE68"/>
<dbReference type="SMR" id="Q8TE68"/>
<dbReference type="BioGRID" id="120218">
    <property type="interactions" value="60"/>
</dbReference>
<dbReference type="CORUM" id="Q8TE68"/>
<dbReference type="FunCoup" id="Q8TE68">
    <property type="interactions" value="192"/>
</dbReference>
<dbReference type="IntAct" id="Q8TE68">
    <property type="interactions" value="39"/>
</dbReference>
<dbReference type="MINT" id="Q8TE68"/>
<dbReference type="STRING" id="9606.ENSP00000201647"/>
<dbReference type="iPTMnet" id="Q8TE68"/>
<dbReference type="PhosphoSitePlus" id="Q8TE68"/>
<dbReference type="BioMuta" id="EPS8L1"/>
<dbReference type="jPOST" id="Q8TE68"/>
<dbReference type="MassIVE" id="Q8TE68"/>
<dbReference type="PaxDb" id="9606-ENSP00000201647"/>
<dbReference type="PeptideAtlas" id="Q8TE68"/>
<dbReference type="ProteomicsDB" id="74407">
    <molecule id="Q8TE68-1"/>
</dbReference>
<dbReference type="ProteomicsDB" id="74408">
    <molecule id="Q8TE68-2"/>
</dbReference>
<dbReference type="ProteomicsDB" id="74409">
    <molecule id="Q8TE68-3"/>
</dbReference>
<dbReference type="ProteomicsDB" id="74410">
    <molecule id="Q8TE68-4"/>
</dbReference>
<dbReference type="Antibodypedia" id="19481">
    <property type="antibodies" value="150 antibodies from 24 providers"/>
</dbReference>
<dbReference type="DNASU" id="54869"/>
<dbReference type="Ensembl" id="ENST00000201647.11">
    <molecule id="Q8TE68-1"/>
    <property type="protein sequence ID" value="ENSP00000201647.5"/>
    <property type="gene ID" value="ENSG00000131037.15"/>
</dbReference>
<dbReference type="Ensembl" id="ENST00000245618.5">
    <molecule id="Q8TE68-2"/>
    <property type="protein sequence ID" value="ENSP00000245618.4"/>
    <property type="gene ID" value="ENSG00000131037.15"/>
</dbReference>
<dbReference type="GeneID" id="54869"/>
<dbReference type="KEGG" id="hsa:54869"/>
<dbReference type="MANE-Select" id="ENST00000201647.11">
    <property type="protein sequence ID" value="ENSP00000201647.5"/>
    <property type="RefSeq nucleotide sequence ID" value="NM_133180.3"/>
    <property type="RefSeq protein sequence ID" value="NP_573441.2"/>
</dbReference>
<dbReference type="UCSC" id="uc002qis.5">
    <molecule id="Q8TE68-1"/>
    <property type="organism name" value="human"/>
</dbReference>
<dbReference type="AGR" id="HGNC:21295"/>
<dbReference type="CTD" id="54869"/>
<dbReference type="DisGeNET" id="54869"/>
<dbReference type="GeneCards" id="EPS8L1"/>
<dbReference type="HGNC" id="HGNC:21295">
    <property type="gene designation" value="EPS8L1"/>
</dbReference>
<dbReference type="HPA" id="ENSG00000131037">
    <property type="expression patterns" value="Tissue enhanced (esophagus, skin)"/>
</dbReference>
<dbReference type="MIM" id="614987">
    <property type="type" value="gene"/>
</dbReference>
<dbReference type="neXtProt" id="NX_Q8TE68"/>
<dbReference type="OpenTargets" id="ENSG00000131037"/>
<dbReference type="PharmGKB" id="PA134990326"/>
<dbReference type="VEuPathDB" id="HostDB:ENSG00000131037"/>
<dbReference type="eggNOG" id="KOG3557">
    <property type="taxonomic scope" value="Eukaryota"/>
</dbReference>
<dbReference type="GeneTree" id="ENSGT00940000158125"/>
<dbReference type="HOGENOM" id="CLU_014510_0_0_1"/>
<dbReference type="InParanoid" id="Q8TE68"/>
<dbReference type="OMA" id="NIIMADV"/>
<dbReference type="OrthoDB" id="4680325at2759"/>
<dbReference type="PAN-GO" id="Q8TE68">
    <property type="GO annotations" value="6 GO annotations based on evolutionary models"/>
</dbReference>
<dbReference type="PhylomeDB" id="Q8TE68"/>
<dbReference type="TreeFam" id="TF313069"/>
<dbReference type="PathwayCommons" id="Q8TE68"/>
<dbReference type="SignaLink" id="Q8TE68"/>
<dbReference type="BioGRID-ORCS" id="54869">
    <property type="hits" value="20 hits in 1157 CRISPR screens"/>
</dbReference>
<dbReference type="ChiTaRS" id="EPS8L1">
    <property type="organism name" value="human"/>
</dbReference>
<dbReference type="EvolutionaryTrace" id="Q8TE68"/>
<dbReference type="GeneWiki" id="EPS8L1"/>
<dbReference type="GenomeRNAi" id="54869"/>
<dbReference type="Pharos" id="Q8TE68">
    <property type="development level" value="Tbio"/>
</dbReference>
<dbReference type="PRO" id="PR:Q8TE68"/>
<dbReference type="Proteomes" id="UP000005640">
    <property type="component" value="Chromosome 19"/>
</dbReference>
<dbReference type="RNAct" id="Q8TE68">
    <property type="molecule type" value="protein"/>
</dbReference>
<dbReference type="Bgee" id="ENSG00000131037">
    <property type="expression patterns" value="Expressed in lower esophagus mucosa and 165 other cell types or tissues"/>
</dbReference>
<dbReference type="ExpressionAtlas" id="Q8TE68">
    <property type="expression patterns" value="baseline and differential"/>
</dbReference>
<dbReference type="GO" id="GO:0005829">
    <property type="term" value="C:cytosol"/>
    <property type="evidence" value="ECO:0000314"/>
    <property type="project" value="HPA"/>
</dbReference>
<dbReference type="GO" id="GO:0070062">
    <property type="term" value="C:extracellular exosome"/>
    <property type="evidence" value="ECO:0007005"/>
    <property type="project" value="UniProtKB"/>
</dbReference>
<dbReference type="GO" id="GO:0005886">
    <property type="term" value="C:plasma membrane"/>
    <property type="evidence" value="ECO:0000318"/>
    <property type="project" value="GO_Central"/>
</dbReference>
<dbReference type="GO" id="GO:0032991">
    <property type="term" value="C:protein-containing complex"/>
    <property type="evidence" value="ECO:0000314"/>
    <property type="project" value="UniProtKB"/>
</dbReference>
<dbReference type="GO" id="GO:0032587">
    <property type="term" value="C:ruffle membrane"/>
    <property type="evidence" value="ECO:0000314"/>
    <property type="project" value="UniProtKB"/>
</dbReference>
<dbReference type="GO" id="GO:0003779">
    <property type="term" value="F:actin binding"/>
    <property type="evidence" value="ECO:0000314"/>
    <property type="project" value="UniProtKB"/>
</dbReference>
<dbReference type="GO" id="GO:0045296">
    <property type="term" value="F:cadherin binding"/>
    <property type="evidence" value="ECO:0007005"/>
    <property type="project" value="BHF-UCL"/>
</dbReference>
<dbReference type="GO" id="GO:0042608">
    <property type="term" value="F:T cell receptor binding"/>
    <property type="evidence" value="ECO:0000353"/>
    <property type="project" value="UniProtKB"/>
</dbReference>
<dbReference type="GO" id="GO:1900029">
    <property type="term" value="P:positive regulation of ruffle assembly"/>
    <property type="evidence" value="ECO:0000316"/>
    <property type="project" value="UniProtKB"/>
</dbReference>
<dbReference type="GO" id="GO:0035023">
    <property type="term" value="P:regulation of Rho protein signal transduction"/>
    <property type="evidence" value="ECO:0000314"/>
    <property type="project" value="UniProtKB"/>
</dbReference>
<dbReference type="GO" id="GO:0007266">
    <property type="term" value="P:Rho protein signal transduction"/>
    <property type="evidence" value="ECO:0000314"/>
    <property type="project" value="UniProtKB"/>
</dbReference>
<dbReference type="CDD" id="cd01210">
    <property type="entry name" value="PTB_EPS8"/>
    <property type="match status" value="1"/>
</dbReference>
<dbReference type="CDD" id="cd09540">
    <property type="entry name" value="SAM_EPS8-like"/>
    <property type="match status" value="1"/>
</dbReference>
<dbReference type="CDD" id="cd11764">
    <property type="entry name" value="SH3_Eps8"/>
    <property type="match status" value="1"/>
</dbReference>
<dbReference type="FunFam" id="1.10.150.50:FF:000023">
    <property type="entry name" value="Epidermal growth factor receptor kinase substrate 8"/>
    <property type="match status" value="1"/>
</dbReference>
<dbReference type="FunFam" id="2.30.30.40:FF:000071">
    <property type="entry name" value="Epidermal growth factor receptor kinase substrate 8"/>
    <property type="match status" value="1"/>
</dbReference>
<dbReference type="FunFam" id="2.30.29.30:FF:000261">
    <property type="entry name" value="Epidermal growth factor receptor kinase substrate 8-like protein 1"/>
    <property type="match status" value="1"/>
</dbReference>
<dbReference type="Gene3D" id="2.30.29.30">
    <property type="entry name" value="Pleckstrin-homology domain (PH domain)/Phosphotyrosine-binding domain (PTB)"/>
    <property type="match status" value="1"/>
</dbReference>
<dbReference type="Gene3D" id="2.30.30.40">
    <property type="entry name" value="SH3 Domains"/>
    <property type="match status" value="1"/>
</dbReference>
<dbReference type="Gene3D" id="1.10.150.50">
    <property type="entry name" value="Transcription Factor, Ets-1"/>
    <property type="match status" value="1"/>
</dbReference>
<dbReference type="InterPro" id="IPR039801">
    <property type="entry name" value="EPS8-like"/>
</dbReference>
<dbReference type="InterPro" id="IPR055093">
    <property type="entry name" value="EPS8_2nd"/>
</dbReference>
<dbReference type="InterPro" id="IPR033928">
    <property type="entry name" value="EPS8_PTB"/>
</dbReference>
<dbReference type="InterPro" id="IPR035462">
    <property type="entry name" value="Eps8_SH3"/>
</dbReference>
<dbReference type="InterPro" id="IPR011993">
    <property type="entry name" value="PH-like_dom_sf"/>
</dbReference>
<dbReference type="InterPro" id="IPR013625">
    <property type="entry name" value="PTB"/>
</dbReference>
<dbReference type="InterPro" id="IPR006020">
    <property type="entry name" value="PTB/PI_dom"/>
</dbReference>
<dbReference type="InterPro" id="IPR013761">
    <property type="entry name" value="SAM/pointed_sf"/>
</dbReference>
<dbReference type="InterPro" id="IPR041418">
    <property type="entry name" value="SAM_3"/>
</dbReference>
<dbReference type="InterPro" id="IPR036028">
    <property type="entry name" value="SH3-like_dom_sf"/>
</dbReference>
<dbReference type="InterPro" id="IPR001452">
    <property type="entry name" value="SH3_domain"/>
</dbReference>
<dbReference type="PANTHER" id="PTHR12287:SF19">
    <property type="entry name" value="EPIDERMAL GROWTH FACTOR RECEPTOR KINASE SUBSTRATE 8-LIKE PROTEIN 1"/>
    <property type="match status" value="1"/>
</dbReference>
<dbReference type="PANTHER" id="PTHR12287">
    <property type="entry name" value="EPIDERMAL GROWTH FACTOR RECEPTOR KINASE SUBSTRATE EPS8-RELATED PROTEIN"/>
    <property type="match status" value="1"/>
</dbReference>
<dbReference type="Pfam" id="PF22975">
    <property type="entry name" value="EPS8_2nd"/>
    <property type="match status" value="1"/>
</dbReference>
<dbReference type="Pfam" id="PF08416">
    <property type="entry name" value="PTB"/>
    <property type="match status" value="1"/>
</dbReference>
<dbReference type="Pfam" id="PF18016">
    <property type="entry name" value="SAM_3"/>
    <property type="match status" value="1"/>
</dbReference>
<dbReference type="Pfam" id="PF00018">
    <property type="entry name" value="SH3_1"/>
    <property type="match status" value="1"/>
</dbReference>
<dbReference type="SMART" id="SM00462">
    <property type="entry name" value="PTB"/>
    <property type="match status" value="1"/>
</dbReference>
<dbReference type="SMART" id="SM00326">
    <property type="entry name" value="SH3"/>
    <property type="match status" value="1"/>
</dbReference>
<dbReference type="SUPFAM" id="SSF50729">
    <property type="entry name" value="PH domain-like"/>
    <property type="match status" value="1"/>
</dbReference>
<dbReference type="SUPFAM" id="SSF50044">
    <property type="entry name" value="SH3-domain"/>
    <property type="match status" value="1"/>
</dbReference>
<dbReference type="PROSITE" id="PS50002">
    <property type="entry name" value="SH3"/>
    <property type="match status" value="1"/>
</dbReference>
<proteinExistence type="evidence at protein level"/>
<reference key="1">
    <citation type="journal article" date="1999" name="Zhonghua Yi Xue Yi Chuan Xue Za Zhi">
        <title>Cloning and expression analyses of down-regulated cDNA C6-2A in human esophageal cancer.</title>
        <authorList>
            <person name="Wu K."/>
            <person name="Xu Z."/>
            <person name="Wang M."/>
            <person name="Xu X."/>
            <person name="Han Y."/>
            <person name="Cao Y."/>
            <person name="Wang R."/>
            <person name="Sun Y."/>
            <person name="Wu M."/>
        </authorList>
    </citation>
    <scope>NUCLEOTIDE SEQUENCE [GENOMIC DNA / MRNA] (ISOFORM 4)</scope>
</reference>
<reference key="2">
    <citation type="journal article" date="2003" name="Genomics">
        <title>In silico analysis of the EPS8 gene family: genomic organization, expression profile, and protein structure.</title>
        <authorList>
            <person name="Tocchetti A."/>
            <person name="Confalonieri S."/>
            <person name="Scita G."/>
            <person name="Di Fiore P.P."/>
            <person name="Betsholtz C."/>
        </authorList>
    </citation>
    <scope>NUCLEOTIDE SEQUENCE [MRNA] (ISOFORM 1)</scope>
    <scope>VARIANTS THR-4; GLU-457 AND ARG-669</scope>
</reference>
<reference key="3">
    <citation type="journal article" date="2004" name="Proc. Natl. Acad. Sci. U.S.A.">
        <title>Large-scale cDNA transfection screening for genes related to cancer development and progression.</title>
        <authorList>
            <person name="Wan D."/>
            <person name="Gong Y."/>
            <person name="Qin W."/>
            <person name="Zhang P."/>
            <person name="Li J."/>
            <person name="Wei L."/>
            <person name="Zhou X."/>
            <person name="Li H."/>
            <person name="Qiu X."/>
            <person name="Zhong F."/>
            <person name="He L."/>
            <person name="Yu J."/>
            <person name="Yao G."/>
            <person name="Jiang H."/>
            <person name="Qian L."/>
            <person name="Yu Y."/>
            <person name="Shu H."/>
            <person name="Chen X."/>
            <person name="Xu H."/>
            <person name="Guo M."/>
            <person name="Pan Z."/>
            <person name="Chen Y."/>
            <person name="Ge C."/>
            <person name="Yang S."/>
            <person name="Gu J."/>
        </authorList>
    </citation>
    <scope>NUCLEOTIDE SEQUENCE [LARGE SCALE MRNA] (ISOFORM 1)</scope>
    <scope>VARIANTS THR-4; GLU-457 AND ARG-669</scope>
</reference>
<reference key="4">
    <citation type="journal article" date="2004" name="Nat. Genet.">
        <title>Complete sequencing and characterization of 21,243 full-length human cDNAs.</title>
        <authorList>
            <person name="Ota T."/>
            <person name="Suzuki Y."/>
            <person name="Nishikawa T."/>
            <person name="Otsuki T."/>
            <person name="Sugiyama T."/>
            <person name="Irie R."/>
            <person name="Wakamatsu A."/>
            <person name="Hayashi K."/>
            <person name="Sato H."/>
            <person name="Nagai K."/>
            <person name="Kimura K."/>
            <person name="Makita H."/>
            <person name="Sekine M."/>
            <person name="Obayashi M."/>
            <person name="Nishi T."/>
            <person name="Shibahara T."/>
            <person name="Tanaka T."/>
            <person name="Ishii S."/>
            <person name="Yamamoto J."/>
            <person name="Saito K."/>
            <person name="Kawai Y."/>
            <person name="Isono Y."/>
            <person name="Nakamura Y."/>
            <person name="Nagahari K."/>
            <person name="Murakami K."/>
            <person name="Yasuda T."/>
            <person name="Iwayanagi T."/>
            <person name="Wagatsuma M."/>
            <person name="Shiratori A."/>
            <person name="Sudo H."/>
            <person name="Hosoiri T."/>
            <person name="Kaku Y."/>
            <person name="Kodaira H."/>
            <person name="Kondo H."/>
            <person name="Sugawara M."/>
            <person name="Takahashi M."/>
            <person name="Kanda K."/>
            <person name="Yokoi T."/>
            <person name="Furuya T."/>
            <person name="Kikkawa E."/>
            <person name="Omura Y."/>
            <person name="Abe K."/>
            <person name="Kamihara K."/>
            <person name="Katsuta N."/>
            <person name="Sato K."/>
            <person name="Tanikawa M."/>
            <person name="Yamazaki M."/>
            <person name="Ninomiya K."/>
            <person name="Ishibashi T."/>
            <person name="Yamashita H."/>
            <person name="Murakawa K."/>
            <person name="Fujimori K."/>
            <person name="Tanai H."/>
            <person name="Kimata M."/>
            <person name="Watanabe M."/>
            <person name="Hiraoka S."/>
            <person name="Chiba Y."/>
            <person name="Ishida S."/>
            <person name="Ono Y."/>
            <person name="Takiguchi S."/>
            <person name="Watanabe S."/>
            <person name="Yosida M."/>
            <person name="Hotuta T."/>
            <person name="Kusano J."/>
            <person name="Kanehori K."/>
            <person name="Takahashi-Fujii A."/>
            <person name="Hara H."/>
            <person name="Tanase T.-O."/>
            <person name="Nomura Y."/>
            <person name="Togiya S."/>
            <person name="Komai F."/>
            <person name="Hara R."/>
            <person name="Takeuchi K."/>
            <person name="Arita M."/>
            <person name="Imose N."/>
            <person name="Musashino K."/>
            <person name="Yuuki H."/>
            <person name="Oshima A."/>
            <person name="Sasaki N."/>
            <person name="Aotsuka S."/>
            <person name="Yoshikawa Y."/>
            <person name="Matsunawa H."/>
            <person name="Ichihara T."/>
            <person name="Shiohata N."/>
            <person name="Sano S."/>
            <person name="Moriya S."/>
            <person name="Momiyama H."/>
            <person name="Satoh N."/>
            <person name="Takami S."/>
            <person name="Terashima Y."/>
            <person name="Suzuki O."/>
            <person name="Nakagawa S."/>
            <person name="Senoh A."/>
            <person name="Mizoguchi H."/>
            <person name="Goto Y."/>
            <person name="Shimizu F."/>
            <person name="Wakebe H."/>
            <person name="Hishigaki H."/>
            <person name="Watanabe T."/>
            <person name="Sugiyama A."/>
            <person name="Takemoto M."/>
            <person name="Kawakami B."/>
            <person name="Yamazaki M."/>
            <person name="Watanabe K."/>
            <person name="Kumagai A."/>
            <person name="Itakura S."/>
            <person name="Fukuzumi Y."/>
            <person name="Fujimori Y."/>
            <person name="Komiyama M."/>
            <person name="Tashiro H."/>
            <person name="Tanigami A."/>
            <person name="Fujiwara T."/>
            <person name="Ono T."/>
            <person name="Yamada K."/>
            <person name="Fujii Y."/>
            <person name="Ozaki K."/>
            <person name="Hirao M."/>
            <person name="Ohmori Y."/>
            <person name="Kawabata A."/>
            <person name="Hikiji T."/>
            <person name="Kobatake N."/>
            <person name="Inagaki H."/>
            <person name="Ikema Y."/>
            <person name="Okamoto S."/>
            <person name="Okitani R."/>
            <person name="Kawakami T."/>
            <person name="Noguchi S."/>
            <person name="Itoh T."/>
            <person name="Shigeta K."/>
            <person name="Senba T."/>
            <person name="Matsumura K."/>
            <person name="Nakajima Y."/>
            <person name="Mizuno T."/>
            <person name="Morinaga M."/>
            <person name="Sasaki M."/>
            <person name="Togashi T."/>
            <person name="Oyama M."/>
            <person name="Hata H."/>
            <person name="Watanabe M."/>
            <person name="Komatsu T."/>
            <person name="Mizushima-Sugano J."/>
            <person name="Satoh T."/>
            <person name="Shirai Y."/>
            <person name="Takahashi Y."/>
            <person name="Nakagawa K."/>
            <person name="Okumura K."/>
            <person name="Nagase T."/>
            <person name="Nomura N."/>
            <person name="Kikuchi H."/>
            <person name="Masuho Y."/>
            <person name="Yamashita R."/>
            <person name="Nakai K."/>
            <person name="Yada T."/>
            <person name="Nakamura Y."/>
            <person name="Ohara O."/>
            <person name="Isogai T."/>
            <person name="Sugano S."/>
        </authorList>
    </citation>
    <scope>NUCLEOTIDE SEQUENCE [LARGE SCALE MRNA] (ISOFORMS 1 AND 2)</scope>
    <scope>VARIANT ARG-669</scope>
    <source>
        <tissue>Placenta</tissue>
    </source>
</reference>
<reference key="5">
    <citation type="journal article" date="2004" name="Nature">
        <title>The DNA sequence and biology of human chromosome 19.</title>
        <authorList>
            <person name="Grimwood J."/>
            <person name="Gordon L.A."/>
            <person name="Olsen A.S."/>
            <person name="Terry A."/>
            <person name="Schmutz J."/>
            <person name="Lamerdin J.E."/>
            <person name="Hellsten U."/>
            <person name="Goodstein D."/>
            <person name="Couronne O."/>
            <person name="Tran-Gyamfi M."/>
            <person name="Aerts A."/>
            <person name="Altherr M."/>
            <person name="Ashworth L."/>
            <person name="Bajorek E."/>
            <person name="Black S."/>
            <person name="Branscomb E."/>
            <person name="Caenepeel S."/>
            <person name="Carrano A.V."/>
            <person name="Caoile C."/>
            <person name="Chan Y.M."/>
            <person name="Christensen M."/>
            <person name="Cleland C.A."/>
            <person name="Copeland A."/>
            <person name="Dalin E."/>
            <person name="Dehal P."/>
            <person name="Denys M."/>
            <person name="Detter J.C."/>
            <person name="Escobar J."/>
            <person name="Flowers D."/>
            <person name="Fotopulos D."/>
            <person name="Garcia C."/>
            <person name="Georgescu A.M."/>
            <person name="Glavina T."/>
            <person name="Gomez M."/>
            <person name="Gonzales E."/>
            <person name="Groza M."/>
            <person name="Hammon N."/>
            <person name="Hawkins T."/>
            <person name="Haydu L."/>
            <person name="Ho I."/>
            <person name="Huang W."/>
            <person name="Israni S."/>
            <person name="Jett J."/>
            <person name="Kadner K."/>
            <person name="Kimball H."/>
            <person name="Kobayashi A."/>
            <person name="Larionov V."/>
            <person name="Leem S.-H."/>
            <person name="Lopez F."/>
            <person name="Lou Y."/>
            <person name="Lowry S."/>
            <person name="Malfatti S."/>
            <person name="Martinez D."/>
            <person name="McCready P.M."/>
            <person name="Medina C."/>
            <person name="Morgan J."/>
            <person name="Nelson K."/>
            <person name="Nolan M."/>
            <person name="Ovcharenko I."/>
            <person name="Pitluck S."/>
            <person name="Pollard M."/>
            <person name="Popkie A.P."/>
            <person name="Predki P."/>
            <person name="Quan G."/>
            <person name="Ramirez L."/>
            <person name="Rash S."/>
            <person name="Retterer J."/>
            <person name="Rodriguez A."/>
            <person name="Rogers S."/>
            <person name="Salamov A."/>
            <person name="Salazar A."/>
            <person name="She X."/>
            <person name="Smith D."/>
            <person name="Slezak T."/>
            <person name="Solovyev V."/>
            <person name="Thayer N."/>
            <person name="Tice H."/>
            <person name="Tsai M."/>
            <person name="Ustaszewska A."/>
            <person name="Vo N."/>
            <person name="Wagner M."/>
            <person name="Wheeler J."/>
            <person name="Wu K."/>
            <person name="Xie G."/>
            <person name="Yang J."/>
            <person name="Dubchak I."/>
            <person name="Furey T.S."/>
            <person name="DeJong P."/>
            <person name="Dickson M."/>
            <person name="Gordon D."/>
            <person name="Eichler E.E."/>
            <person name="Pennacchio L.A."/>
            <person name="Richardson P."/>
            <person name="Stubbs L."/>
            <person name="Rokhsar D.S."/>
            <person name="Myers R.M."/>
            <person name="Rubin E.M."/>
            <person name="Lucas S.M."/>
        </authorList>
    </citation>
    <scope>NUCLEOTIDE SEQUENCE [LARGE SCALE GENOMIC DNA]</scope>
</reference>
<reference key="6">
    <citation type="journal article" date="2004" name="Genome Res.">
        <title>The status, quality, and expansion of the NIH full-length cDNA project: the Mammalian Gene Collection (MGC).</title>
        <authorList>
            <consortium name="The MGC Project Team"/>
        </authorList>
    </citation>
    <scope>NUCLEOTIDE SEQUENCE [LARGE SCALE MRNA] (ISOFORMS 2 AND 3)</scope>
    <source>
        <tissue>Muscle</tissue>
        <tissue>Skin</tissue>
    </source>
</reference>
<reference key="7">
    <citation type="journal article" date="2004" name="Mol. Biol. Cell">
        <title>The eps8 family of proteins links growth factor stimulation to actin reorganization generating functional redundancy in the Ras/Rac pathway.</title>
        <authorList>
            <person name="Offenhaeuser N."/>
            <person name="Borgonovo A."/>
            <person name="Disanza A."/>
            <person name="Romano P."/>
            <person name="Ponzanelli I."/>
            <person name="Iannolo G."/>
            <person name="Di Fiore P.P."/>
            <person name="Scita G."/>
        </authorList>
    </citation>
    <scope>FUNCTION</scope>
    <scope>IDENTIFICATION IN A COMPLEX WITH ABI1 AND SOS1</scope>
    <scope>INTERACTION WITH ABI1</scope>
    <scope>SUBCELLULAR LOCATION</scope>
    <scope>TISSUE SPECIFICITY</scope>
</reference>
<reference key="8">
    <citation type="journal article" date="2008" name="Proc. Natl. Acad. Sci. U.S.A.">
        <title>A quantitative atlas of mitotic phosphorylation.</title>
        <authorList>
            <person name="Dephoure N."/>
            <person name="Zhou C."/>
            <person name="Villen J."/>
            <person name="Beausoleil S.A."/>
            <person name="Bakalarski C.E."/>
            <person name="Elledge S.J."/>
            <person name="Gygi S.P."/>
        </authorList>
    </citation>
    <scope>IDENTIFICATION BY MASS SPECTROMETRY [LARGE SCALE ANALYSIS]</scope>
    <source>
        <tissue>Cervix carcinoma</tissue>
    </source>
</reference>
<reference key="9">
    <citation type="journal article" date="2013" name="J. Proteome Res.">
        <title>Toward a comprehensive characterization of a human cancer cell phosphoproteome.</title>
        <authorList>
            <person name="Zhou H."/>
            <person name="Di Palma S."/>
            <person name="Preisinger C."/>
            <person name="Peng M."/>
            <person name="Polat A.N."/>
            <person name="Heck A.J."/>
            <person name="Mohammed S."/>
        </authorList>
    </citation>
    <scope>PHOSPHORYLATION [LARGE SCALE ANALYSIS] AT SER-182</scope>
    <scope>IDENTIFICATION BY MASS SPECTROMETRY [LARGE SCALE ANALYSIS]</scope>
    <source>
        <tissue>Cervix carcinoma</tissue>
        <tissue>Erythroleukemia</tissue>
    </source>
</reference>